<sequence length="435" mass="46004">MDFEYIYPIIVLFGSFAIILAVGVPITFAIGLSSLFSILIALPPDAAISVISQKMTVGLDGFTLLAIPFFVLAGNIMNTGGIARRLVNLAQALVGRLPGSLAHCNILANTLFGAISGSAVASAAAVGGIMSPLQEKEGYSPAFSTAINVASAPIGLMIPPSNVLIVYSLASGGTSVAALFLAGYLPGILTALALMTVAALYAHRHHYPVAERINLRQFLSVFRDSLPSLLLIFIIIGGIIGGVFTPTEASAIAVIYSLALAAIYREINVSKLRDILLDSVVTSSIVLLLVGCSMGMSWAMTNADVPELINEMITSVSENKWVILLIINLILLFVGTFMDITPAILIFTPIFLPIAQHLGIDPVHFGIIMVFNLTIGLCTPPVGTILFVGCSIGKISIDKVVKPLLPMFLALFVVMAMICYFPQLSLLLPTLFAPS</sequence>
<dbReference type="EMBL" id="U09309">
    <property type="protein sequence ID" value="AAA56680.1"/>
    <property type="molecule type" value="Unassigned_DNA"/>
</dbReference>
<dbReference type="EMBL" id="AE006468">
    <property type="protein sequence ID" value="AAL22045.1"/>
    <property type="molecule type" value="Genomic_DNA"/>
</dbReference>
<dbReference type="RefSeq" id="NP_462086.1">
    <property type="nucleotide sequence ID" value="NC_003197.2"/>
</dbReference>
<dbReference type="RefSeq" id="WP_000345257.1">
    <property type="nucleotide sequence ID" value="NC_003197.2"/>
</dbReference>
<dbReference type="SMR" id="P40800"/>
<dbReference type="STRING" id="99287.STM3171"/>
<dbReference type="PaxDb" id="99287-STM3171"/>
<dbReference type="GeneID" id="1254694"/>
<dbReference type="KEGG" id="stm:STM3171"/>
<dbReference type="PATRIC" id="fig|99287.12.peg.3362"/>
<dbReference type="HOGENOM" id="CLU_019824_4_1_6"/>
<dbReference type="PhylomeDB" id="P40800"/>
<dbReference type="BioCyc" id="SENT99287:STM3171-MONOMER"/>
<dbReference type="Proteomes" id="UP000001014">
    <property type="component" value="Chromosome"/>
</dbReference>
<dbReference type="GO" id="GO:0005886">
    <property type="term" value="C:plasma membrane"/>
    <property type="evidence" value="ECO:0000318"/>
    <property type="project" value="GO_Central"/>
</dbReference>
<dbReference type="GO" id="GO:0022857">
    <property type="term" value="F:transmembrane transporter activity"/>
    <property type="evidence" value="ECO:0000318"/>
    <property type="project" value="GO_Central"/>
</dbReference>
<dbReference type="InterPro" id="IPR010656">
    <property type="entry name" value="DctM"/>
</dbReference>
<dbReference type="InterPro" id="IPR004681">
    <property type="entry name" value="TRAP_DctM"/>
</dbReference>
<dbReference type="NCBIfam" id="TIGR00786">
    <property type="entry name" value="dctM"/>
    <property type="match status" value="1"/>
</dbReference>
<dbReference type="PANTHER" id="PTHR33362">
    <property type="entry name" value="SIALIC ACID TRAP TRANSPORTER PERMEASE PROTEIN SIAT-RELATED"/>
    <property type="match status" value="1"/>
</dbReference>
<dbReference type="PANTHER" id="PTHR33362:SF2">
    <property type="entry name" value="TRAP TRANSPORTER LARGE PERMEASE PROTEIN"/>
    <property type="match status" value="1"/>
</dbReference>
<dbReference type="Pfam" id="PF06808">
    <property type="entry name" value="DctM"/>
    <property type="match status" value="1"/>
</dbReference>
<dbReference type="PIRSF" id="PIRSF006066">
    <property type="entry name" value="HI0050"/>
    <property type="match status" value="1"/>
</dbReference>
<organism>
    <name type="scientific">Salmonella typhimurium (strain LT2 / SGSC1412 / ATCC 700720)</name>
    <dbReference type="NCBI Taxonomy" id="99287"/>
    <lineage>
        <taxon>Bacteria</taxon>
        <taxon>Pseudomonadati</taxon>
        <taxon>Pseudomonadota</taxon>
        <taxon>Gammaproteobacteria</taxon>
        <taxon>Enterobacterales</taxon>
        <taxon>Enterobacteriaceae</taxon>
        <taxon>Salmonella</taxon>
    </lineage>
</organism>
<name>YGIK_SALTY</name>
<protein>
    <recommendedName>
        <fullName>Uncharacterized protein YgiK</fullName>
    </recommendedName>
</protein>
<gene>
    <name type="primary">ygiK</name>
    <name type="ordered locus">STM3171</name>
</gene>
<evidence type="ECO:0000255" key="1"/>
<evidence type="ECO:0000305" key="2"/>
<accession>P40800</accession>
<reference key="1">
    <citation type="submission" date="1994-04" db="EMBL/GenBank/DDBJ databases">
        <authorList>
            <person name="Cong J."/>
            <person name="Schmid M.B."/>
        </authorList>
    </citation>
    <scope>NUCLEOTIDE SEQUENCE [GENOMIC DNA]</scope>
    <source>
        <strain>LT2</strain>
    </source>
</reference>
<reference key="2">
    <citation type="journal article" date="2001" name="Nature">
        <title>Complete genome sequence of Salmonella enterica serovar Typhimurium LT2.</title>
        <authorList>
            <person name="McClelland M."/>
            <person name="Sanderson K.E."/>
            <person name="Spieth J."/>
            <person name="Clifton S.W."/>
            <person name="Latreille P."/>
            <person name="Courtney L."/>
            <person name="Porwollik S."/>
            <person name="Ali J."/>
            <person name="Dante M."/>
            <person name="Du F."/>
            <person name="Hou S."/>
            <person name="Layman D."/>
            <person name="Leonard S."/>
            <person name="Nguyen C."/>
            <person name="Scott K."/>
            <person name="Holmes A."/>
            <person name="Grewal N."/>
            <person name="Mulvaney E."/>
            <person name="Ryan E."/>
            <person name="Sun H."/>
            <person name="Florea L."/>
            <person name="Miller W."/>
            <person name="Stoneking T."/>
            <person name="Nhan M."/>
            <person name="Waterston R."/>
            <person name="Wilson R.K."/>
        </authorList>
    </citation>
    <scope>NUCLEOTIDE SEQUENCE [LARGE SCALE GENOMIC DNA]</scope>
    <source>
        <strain>LT2 / SGSC1412 / ATCC 700720</strain>
    </source>
</reference>
<feature type="chain" id="PRO_0000205370" description="Uncharacterized protein YgiK">
    <location>
        <begin position="1"/>
        <end position="435"/>
    </location>
</feature>
<feature type="transmembrane region" description="Helical" evidence="1">
    <location>
        <begin position="9"/>
        <end position="29"/>
    </location>
</feature>
<feature type="transmembrane region" description="Helical" evidence="1">
    <location>
        <begin position="57"/>
        <end position="77"/>
    </location>
</feature>
<feature type="transmembrane region" description="Helical" evidence="1">
    <location>
        <begin position="110"/>
        <end position="130"/>
    </location>
</feature>
<feature type="transmembrane region" description="Helical" evidence="1">
    <location>
        <begin position="146"/>
        <end position="166"/>
    </location>
</feature>
<feature type="transmembrane region" description="Helical" evidence="1">
    <location>
        <begin position="176"/>
        <end position="196"/>
    </location>
</feature>
<feature type="transmembrane region" description="Helical" evidence="1">
    <location>
        <begin position="226"/>
        <end position="246"/>
    </location>
</feature>
<feature type="transmembrane region" description="Helical" evidence="1">
    <location>
        <begin position="280"/>
        <end position="300"/>
    </location>
</feature>
<feature type="transmembrane region" description="Helical" evidence="1">
    <location>
        <begin position="321"/>
        <end position="341"/>
    </location>
</feature>
<feature type="transmembrane region" description="Helical" evidence="1">
    <location>
        <begin position="343"/>
        <end position="363"/>
    </location>
</feature>
<feature type="transmembrane region" description="Helical" evidence="1">
    <location>
        <begin position="367"/>
        <end position="387"/>
    </location>
</feature>
<feature type="transmembrane region" description="Helical" evidence="1">
    <location>
        <begin position="408"/>
        <end position="428"/>
    </location>
</feature>
<feature type="sequence conflict" description="In Ref. 1; AAA56680." evidence="2" ref="1">
    <original>A</original>
    <variation>R</variation>
    <location>
        <position position="119"/>
    </location>
</feature>
<feature type="sequence conflict" description="In Ref. 1; AAA56680." evidence="2" ref="1">
    <original>A</original>
    <variation>P</variation>
    <location>
        <position position="124"/>
    </location>
</feature>
<keyword id="KW-0997">Cell inner membrane</keyword>
<keyword id="KW-1003">Cell membrane</keyword>
<keyword id="KW-0472">Membrane</keyword>
<keyword id="KW-1185">Reference proteome</keyword>
<keyword id="KW-0812">Transmembrane</keyword>
<keyword id="KW-1133">Transmembrane helix</keyword>
<proteinExistence type="inferred from homology"/>
<comment type="subcellular location">
    <subcellularLocation>
        <location evidence="2">Cell inner membrane</location>
        <topology evidence="2">Multi-pass membrane protein</topology>
    </subcellularLocation>
</comment>
<comment type="similarity">
    <text evidence="2">Belongs to the YiaN/YgiK family.</text>
</comment>